<organism>
    <name type="scientific">Escherichia coli</name>
    <dbReference type="NCBI Taxonomy" id="562"/>
    <lineage>
        <taxon>Bacteria</taxon>
        <taxon>Pseudomonadati</taxon>
        <taxon>Pseudomonadota</taxon>
        <taxon>Gammaproteobacteria</taxon>
        <taxon>Enterobacterales</taxon>
        <taxon>Enterobacteriaceae</taxon>
        <taxon>Escherichia</taxon>
    </lineage>
</organism>
<geneLocation type="plasmid">
    <name>unnamed</name>
</geneLocation>
<gene>
    <name type="primary">espP</name>
    <name type="synonym">pssA</name>
</gene>
<accession>O32591</accession>
<protein>
    <recommendedName>
        <fullName>Serine protease EspP</fullName>
        <ecNumber>3.4.21.-</ecNumber>
    </recommendedName>
    <component>
        <recommendedName>
            <fullName>Secreted autotransporter protein EspP</fullName>
        </recommendedName>
        <alternativeName>
            <fullName>Extracellular serine protease plasmid-encoded EspP</fullName>
        </alternativeName>
    </component>
    <component>
        <recommendedName>
            <fullName>Autotransporter protein EspP translocator</fullName>
        </recommendedName>
    </component>
</protein>
<feature type="signal peptide" evidence="4">
    <location>
        <begin position="1"/>
        <end position="55"/>
    </location>
</feature>
<feature type="chain" id="PRO_0000387593" description="Serine protease EspP">
    <location>
        <begin position="56"/>
        <end position="1300"/>
    </location>
</feature>
<feature type="chain" id="PRO_0000042018" description="Secreted autotransporter protein EspP">
    <location>
        <begin position="56"/>
        <end position="1023"/>
    </location>
</feature>
<feature type="chain" id="PRO_0000042019" description="Autotransporter protein EspP translocator" evidence="1">
    <location>
        <begin position="1024"/>
        <end position="1300"/>
    </location>
</feature>
<feature type="domain" description="Peptidase S6" evidence="3">
    <location>
        <begin position="57"/>
        <end position="311"/>
    </location>
</feature>
<feature type="domain" description="Autotransporter" evidence="2">
    <location>
        <begin position="1034"/>
        <end position="1300"/>
    </location>
</feature>
<feature type="active site" description="Charge relay system" evidence="3">
    <location>
        <position position="127"/>
    </location>
</feature>
<feature type="active site" description="Charge relay system" evidence="3">
    <location>
        <position position="156"/>
    </location>
</feature>
<feature type="active site" description="Charge relay system" evidence="3">
    <location>
        <position position="263"/>
    </location>
</feature>
<feature type="site" description="Cleavage" evidence="1">
    <location>
        <begin position="1023"/>
        <end position="1024"/>
    </location>
</feature>
<feature type="strand" evidence="6">
    <location>
        <begin position="1269"/>
        <end position="1272"/>
    </location>
</feature>
<feature type="strand" evidence="6">
    <location>
        <begin position="1282"/>
        <end position="1286"/>
    </location>
</feature>
<dbReference type="EC" id="3.4.21.-"/>
<dbReference type="EMBL" id="Y13614">
    <property type="protein sequence ID" value="CAA73935.1"/>
    <property type="molecule type" value="Genomic_DNA"/>
</dbReference>
<dbReference type="PDB" id="7RI4">
    <property type="method" value="EM"/>
    <property type="resolution" value="3.40 A"/>
    <property type="chains" value="G=1218-1300"/>
</dbReference>
<dbReference type="PDB" id="7TSZ">
    <property type="method" value="EM"/>
    <property type="resolution" value="4.50 A"/>
    <property type="chains" value="P=948-1298"/>
</dbReference>
<dbReference type="PDB" id="7TT0">
    <property type="method" value="EM"/>
    <property type="resolution" value="4.30 A"/>
    <property type="chains" value="P=948-1298"/>
</dbReference>
<dbReference type="PDB" id="7TT1">
    <property type="method" value="EM"/>
    <property type="resolution" value="4.30 A"/>
    <property type="chains" value="P=948-1298"/>
</dbReference>
<dbReference type="PDB" id="7TT2">
    <property type="method" value="EM"/>
    <property type="resolution" value="4.20 A"/>
    <property type="chains" value="P=948-1298"/>
</dbReference>
<dbReference type="PDB" id="7TT3">
    <property type="method" value="EM"/>
    <property type="resolution" value="4.30 A"/>
    <property type="chains" value="P=948-1298"/>
</dbReference>
<dbReference type="PDB" id="7TT4">
    <property type="method" value="EM"/>
    <property type="resolution" value="4.20 A"/>
    <property type="chains" value="P=948-1298"/>
</dbReference>
<dbReference type="PDB" id="7TT5">
    <property type="method" value="EM"/>
    <property type="resolution" value="4.30 A"/>
    <property type="chains" value="P=948-1298"/>
</dbReference>
<dbReference type="PDB" id="7TT6">
    <property type="method" value="EM"/>
    <property type="resolution" value="4.30 A"/>
    <property type="chains" value="P=948-1298"/>
</dbReference>
<dbReference type="PDB" id="7TT7">
    <property type="method" value="EM"/>
    <property type="resolution" value="4.80 A"/>
    <property type="chains" value="P=948-1298"/>
</dbReference>
<dbReference type="PDB" id="7TTC">
    <property type="method" value="EM"/>
    <property type="resolution" value="3.60 A"/>
    <property type="chains" value="P=1024-1298"/>
</dbReference>
<dbReference type="PDB" id="8Q0G">
    <property type="method" value="EM"/>
    <property type="resolution" value="4.30 A"/>
    <property type="chains" value="P=948-1300"/>
</dbReference>
<dbReference type="PDB" id="8QN4">
    <property type="method" value="EM"/>
    <property type="resolution" value="3.36 A"/>
    <property type="chains" value="F=948-1300"/>
</dbReference>
<dbReference type="PDB" id="8QP5">
    <property type="method" value="EM"/>
    <property type="resolution" value="4.40 A"/>
    <property type="chains" value="P=948-1300"/>
</dbReference>
<dbReference type="PDB" id="8QPU">
    <property type="method" value="EM"/>
    <property type="resolution" value="5.20 A"/>
    <property type="chains" value="P=948-1300"/>
</dbReference>
<dbReference type="PDB" id="8SPR">
    <property type="method" value="EM"/>
    <property type="resolution" value="3.90 A"/>
    <property type="chains" value="F=949-1300"/>
</dbReference>
<dbReference type="PDB" id="8SQA">
    <property type="method" value="EM"/>
    <property type="resolution" value="4.20 A"/>
    <property type="chains" value="F=1195-1300"/>
</dbReference>
<dbReference type="PDB" id="8SQB">
    <property type="method" value="EM"/>
    <property type="resolution" value="3.80 A"/>
    <property type="chains" value="F=948-1300"/>
</dbReference>
<dbReference type="PDBsum" id="7RI4"/>
<dbReference type="PDBsum" id="7TSZ"/>
<dbReference type="PDBsum" id="7TT0"/>
<dbReference type="PDBsum" id="7TT1"/>
<dbReference type="PDBsum" id="7TT2"/>
<dbReference type="PDBsum" id="7TT3"/>
<dbReference type="PDBsum" id="7TT4"/>
<dbReference type="PDBsum" id="7TT5"/>
<dbReference type="PDBsum" id="7TT6"/>
<dbReference type="PDBsum" id="7TT7"/>
<dbReference type="PDBsum" id="7TTC"/>
<dbReference type="PDBsum" id="8Q0G"/>
<dbReference type="PDBsum" id="8QN4"/>
<dbReference type="PDBsum" id="8QP5"/>
<dbReference type="PDBsum" id="8QPU"/>
<dbReference type="PDBsum" id="8SPR"/>
<dbReference type="PDBsum" id="8SQA"/>
<dbReference type="PDBsum" id="8SQB"/>
<dbReference type="SMR" id="O32591"/>
<dbReference type="IntAct" id="O32591">
    <property type="interactions" value="3"/>
</dbReference>
<dbReference type="MEROPS" id="N04.002"/>
<dbReference type="MEROPS" id="S06.002"/>
<dbReference type="GO" id="GO:0009279">
    <property type="term" value="C:cell outer membrane"/>
    <property type="evidence" value="ECO:0007669"/>
    <property type="project" value="UniProtKB-SubCell"/>
</dbReference>
<dbReference type="GO" id="GO:0009986">
    <property type="term" value="C:cell surface"/>
    <property type="evidence" value="ECO:0007669"/>
    <property type="project" value="UniProtKB-SubCell"/>
</dbReference>
<dbReference type="GO" id="GO:0005576">
    <property type="term" value="C:extracellular region"/>
    <property type="evidence" value="ECO:0007669"/>
    <property type="project" value="UniProtKB-SubCell"/>
</dbReference>
<dbReference type="GO" id="GO:0042597">
    <property type="term" value="C:periplasmic space"/>
    <property type="evidence" value="ECO:0007669"/>
    <property type="project" value="UniProtKB-SubCell"/>
</dbReference>
<dbReference type="GO" id="GO:0004252">
    <property type="term" value="F:serine-type endopeptidase activity"/>
    <property type="evidence" value="ECO:0007669"/>
    <property type="project" value="InterPro"/>
</dbReference>
<dbReference type="GO" id="GO:0006508">
    <property type="term" value="P:proteolysis"/>
    <property type="evidence" value="ECO:0007669"/>
    <property type="project" value="UniProtKB-KW"/>
</dbReference>
<dbReference type="GO" id="GO:0035899">
    <property type="term" value="P:suppression of blood coagulation in another organism"/>
    <property type="evidence" value="ECO:0000269"/>
    <property type="project" value="SigSci"/>
</dbReference>
<dbReference type="CDD" id="cd01343">
    <property type="entry name" value="PL1_Passenger_AT"/>
    <property type="match status" value="1"/>
</dbReference>
<dbReference type="Gene3D" id="2.160.20.20">
    <property type="match status" value="1"/>
</dbReference>
<dbReference type="Gene3D" id="2.40.10.120">
    <property type="match status" value="1"/>
</dbReference>
<dbReference type="Gene3D" id="2.40.128.130">
    <property type="entry name" value="Autotransporter beta-domain"/>
    <property type="match status" value="1"/>
</dbReference>
<dbReference type="InterPro" id="IPR005546">
    <property type="entry name" value="Autotransporte_beta"/>
</dbReference>
<dbReference type="InterPro" id="IPR036709">
    <property type="entry name" value="Autotransporte_beta_dom_sf"/>
</dbReference>
<dbReference type="InterPro" id="IPR012332">
    <property type="entry name" value="Autotransporter_pectin_lyase_C"/>
</dbReference>
<dbReference type="InterPro" id="IPR006315">
    <property type="entry name" value="OM_autotransptr_brl_dom"/>
</dbReference>
<dbReference type="InterPro" id="IPR011050">
    <property type="entry name" value="Pectin_lyase_fold/virulence"/>
</dbReference>
<dbReference type="InterPro" id="IPR000710">
    <property type="entry name" value="Peptidase_S6"/>
</dbReference>
<dbReference type="InterPro" id="IPR030396">
    <property type="entry name" value="Peptidase_S6_dom"/>
</dbReference>
<dbReference type="NCBIfam" id="TIGR01414">
    <property type="entry name" value="autotrans_barl"/>
    <property type="match status" value="1"/>
</dbReference>
<dbReference type="Pfam" id="PF03797">
    <property type="entry name" value="Autotransporter"/>
    <property type="match status" value="1"/>
</dbReference>
<dbReference type="Pfam" id="PF02395">
    <property type="entry name" value="Peptidase_S6"/>
    <property type="match status" value="1"/>
</dbReference>
<dbReference type="PRINTS" id="PR00921">
    <property type="entry name" value="IGASERPTASE"/>
</dbReference>
<dbReference type="SMART" id="SM00869">
    <property type="entry name" value="Autotransporter"/>
    <property type="match status" value="1"/>
</dbReference>
<dbReference type="SUPFAM" id="SSF103515">
    <property type="entry name" value="Autotransporter"/>
    <property type="match status" value="1"/>
</dbReference>
<dbReference type="SUPFAM" id="SSF51126">
    <property type="entry name" value="Pectin lyase-like"/>
    <property type="match status" value="1"/>
</dbReference>
<dbReference type="PROSITE" id="PS51208">
    <property type="entry name" value="AUTOTRANSPORTER"/>
    <property type="match status" value="1"/>
</dbReference>
<dbReference type="PROSITE" id="PS51691">
    <property type="entry name" value="PEPTIDASE_S6"/>
    <property type="match status" value="1"/>
</dbReference>
<sequence length="1300" mass="141710">MNKIYSLKYSHITGGLIAVSELSGRVSSRATGKKKHKRILALCFLGLLQSSYSFASQMDISNFYIRDYMDFAQNKGIFQAGATNIEIVKKDGSTLKLPEVPFPDFSPVANKGSTTSIGGAYSITATHNTKNHHSVATQNWGNSTYKQTDWNTSHPDFAVSRLDKFVVETRGATEGADISLSKQQALERYGVNYKGEKKLIAFRAGSGVVSVKKNGRITPFNEVSYKPEMLNGSFVHIDDWSGWLILTNNQFDEFNNIASQGDSGSALFVYDNQKKKWVVAGTVWGIYNYANGKNHAAYSKWNQTTIDNLKNKYSYNVDMSGAQVATIENGKLTGTGSDTTDIKNKDLIFTGGGDILLKSSFDNGAGGLVFNDKKTYRVNGDDFTFKGAGVDTRNGSTVEWNIRYDNKDNLHKIGDGTLDVRKTQNTNLKTGEGLVILGAEKTFNNIYITSGDGTVRLNAENALSGGEYNGIFFAKNGGTLDLNGYNQSFNKIAATDSGAVITNTSTKKSILSLNNTADYIYHGNINGNLDVLQHHETKKENRRLILDGGVDTTNDISLRNTQLSMQGHATEHAIYRDGAFSCSLPAPMRFLCGSDYVAGMQNTEADAVKQNGNAYKTNNAVSDLSQPDWETGTFRFGTLHLENSDFSVGRNANVIGDIQASKSNITIGDTTAYIDLHAGKNITGDGFGFRQNIVRGNSQGETLFTGGITAEDSTIVIKDKAKALFSNYVYLLNTKATIENGADVTTQSGMFSTSDISISGNLSMTGNPDKDNKFEPSIYLNDASYLLTDDSARLVAKNKASVVGDIHSTKSASIMFGHDESDLSQLSDRTSKGLALGLLGGFDVSYRGSVNAPSASATMNNTWWQLTGDSALKTLKSTNSMVYFTDSANNKKFHTLTVDELATSNSAYAMRTNLSESDKLEVKKHLSGENNILLVDFLQKPTPEKQLNIELVSAPKDTNENVFKASKQTIGFSDVTPVITTRETDDKITWSLTGYNTVANKEATRNAAALFSVDYKAFLNEVNNLNKRMGDLRDINGEAGAWARIMSGTGSASGGFSDNYTHVQVGVDKKHELDGLDLFTGFTVTHTDSSASADVFSGKTKSVGAGLYASAMVDSGAYIDLIGKYVHHDNEYTATFAGLGTRDYSTHSWYAGAEAGYRYHVTEDAWIEPQAELVYGSVSGKQFAWKDQGMHLSMKDKDYNPLIGRTGVDVGKSFSGKDWKVTARAGLGYQFDLLANGETVLRDASGEKRIKGEKDSRMLMSVGLNAEIRDNVRFGLEFEKSAFGKYNVDNAVNANFRYSF</sequence>
<comment type="function">
    <text evidence="4">Serine protease with cytotoxic effect. Disrupts actin cytoskeleton resulting cell detachment in vitro.</text>
</comment>
<comment type="interaction">
    <interactant intactId="EBI-852989">
        <id>O32591</id>
    </interactant>
    <interactant intactId="EBI-543276">
        <id>P0A8Z3</id>
        <label>ybgC</label>
    </interactant>
    <organismsDiffer>true</organismsDiffer>
    <experiments>3</experiments>
</comment>
<comment type="subcellular location">
    <molecule>Serine protease EspP</molecule>
    <subcellularLocation>
        <location evidence="1">Periplasm</location>
    </subcellularLocation>
</comment>
<comment type="subcellular location">
    <molecule>Secreted autotransporter protein EspP</molecule>
    <subcellularLocation>
        <location>Secreted</location>
    </subcellularLocation>
    <subcellularLocation>
        <location>Cell surface</location>
    </subcellularLocation>
</comment>
<comment type="subcellular location">
    <molecule>Autotransporter protein EspP translocator</molecule>
    <subcellularLocation>
        <location evidence="1">Cell outer membrane</location>
        <topology evidence="1">Multi-pass membrane protein</topology>
    </subcellularLocation>
    <text evidence="1">The cleaved C-terminal fragment (autotransporter domain) is localized in the outer membrane.</text>
</comment>
<comment type="domain">
    <text evidence="1">The signal peptide, cleaved at the inner membrane, guides the autotransporter protein to the periplasmic space. Then, insertion of the C-terminal translocator domain in the outer membrane forms a hydrophilic pore for the translocation of the passenger domain to the bacterial cell surface, with subsequent cleavage (By similarity).</text>
</comment>
<comment type="PTM">
    <text evidence="1">Cleaved to release the mature protein from the outer membrane.</text>
</comment>
<comment type="miscellaneous">
    <text evidence="5">Encoded on an unnamed 94 kb plasmid.</text>
</comment>
<proteinExistence type="evidence at protein level"/>
<reference key="1">
    <citation type="journal article" date="1997" name="Mol. Microbiol.">
        <title>Characterization of an exported protease from Shiga toxin-producing Escherichia coli.</title>
        <authorList>
            <person name="Djafari S."/>
            <person name="Ebel F."/>
            <person name="Deibel C."/>
            <person name="Kraemer S."/>
            <person name="Hudel M."/>
            <person name="Chakraborty T."/>
        </authorList>
    </citation>
    <scope>NUCLEOTIDE SEQUENCE [GENOMIC DNA]</scope>
    <scope>PROTEIN SEQUENCE OF 56-85</scope>
    <scope>FUNCTION</scope>
    <source>
        <strain>O26:H- / 413/89-1 / EHEC</strain>
        <plasmid>unnamed</plasmid>
    </source>
</reference>
<evidence type="ECO:0000250" key="1"/>
<evidence type="ECO:0000255" key="2">
    <source>
        <dbReference type="PROSITE-ProRule" id="PRU00556"/>
    </source>
</evidence>
<evidence type="ECO:0000255" key="3">
    <source>
        <dbReference type="PROSITE-ProRule" id="PRU01028"/>
    </source>
</evidence>
<evidence type="ECO:0000269" key="4">
    <source>
    </source>
</evidence>
<evidence type="ECO:0000305" key="5">
    <source>
    </source>
</evidence>
<evidence type="ECO:0007829" key="6">
    <source>
        <dbReference type="PDB" id="7RI4"/>
    </source>
</evidence>
<keyword id="KW-0002">3D-structure</keyword>
<keyword id="KW-0998">Cell outer membrane</keyword>
<keyword id="KW-0903">Direct protein sequencing</keyword>
<keyword id="KW-0378">Hydrolase</keyword>
<keyword id="KW-0472">Membrane</keyword>
<keyword id="KW-0574">Periplasm</keyword>
<keyword id="KW-0614">Plasmid</keyword>
<keyword id="KW-0645">Protease</keyword>
<keyword id="KW-0964">Secreted</keyword>
<keyword id="KW-0720">Serine protease</keyword>
<keyword id="KW-0732">Signal</keyword>
<keyword id="KW-0812">Transmembrane</keyword>
<keyword id="KW-1134">Transmembrane beta strand</keyword>
<keyword id="KW-0843">Virulence</keyword>
<keyword id="KW-0865">Zymogen</keyword>
<name>ESPP_ECOLX</name>